<proteinExistence type="evidence at transcript level"/>
<comment type="function">
    <text evidence="1">Iota-conotoxins bind to voltage-gated sodium channels (Nav) and act as agonists by shifting the voltage-dependence of activation to more hyperpolarized levels. Produces general excitatory symptoms (By similarity).</text>
</comment>
<comment type="subcellular location">
    <subcellularLocation>
        <location evidence="1">Secreted</location>
    </subcellularLocation>
</comment>
<comment type="tissue specificity">
    <text>Expressed by the venom duct.</text>
</comment>
<comment type="domain">
    <text>The cysteine framework is XI (C-C-CC-CC-C-C).</text>
</comment>
<comment type="similarity">
    <text evidence="3">Belongs to the conotoxin I1 superfamily.</text>
</comment>
<organism>
    <name type="scientific">Conus striatus</name>
    <name type="common">Striated cone</name>
    <dbReference type="NCBI Taxonomy" id="6493"/>
    <lineage>
        <taxon>Eukaryota</taxon>
        <taxon>Metazoa</taxon>
        <taxon>Spiralia</taxon>
        <taxon>Lophotrochozoa</taxon>
        <taxon>Mollusca</taxon>
        <taxon>Gastropoda</taxon>
        <taxon>Caenogastropoda</taxon>
        <taxon>Neogastropoda</taxon>
        <taxon>Conoidea</taxon>
        <taxon>Conidae</taxon>
        <taxon>Conus</taxon>
        <taxon>Pionoconus</taxon>
    </lineage>
</organism>
<name>I1B2_CONST</name>
<keyword id="KW-0208">D-amino acid</keyword>
<keyword id="KW-1015">Disulfide bond</keyword>
<keyword id="KW-0872">Ion channel impairing toxin</keyword>
<keyword id="KW-0528">Neurotoxin</keyword>
<keyword id="KW-0964">Secreted</keyword>
<keyword id="KW-0800">Toxin</keyword>
<keyword id="KW-0738">Voltage-gated sodium channel impairing toxin</keyword>
<reference key="1">
    <citation type="journal article" date="2005" name="FEBS J.">
        <title>Characterization of D-amino-acid-containing excitatory conotoxins and redefinition of the I-conotoxin superfamily.</title>
        <authorList>
            <person name="Buczek O."/>
            <person name="Yoshikami D."/>
            <person name="Watkins M."/>
            <person name="Bulaj G."/>
            <person name="Jimenez E.C."/>
            <person name="Olivera B.M."/>
        </authorList>
    </citation>
    <scope>NUCLEOTIDE SEQUENCE [MRNA]</scope>
    <source>
        <tissue>Venom duct</tissue>
    </source>
</reference>
<reference key="2">
    <citation type="journal article" date="2005" name="FEBS J.">
        <authorList>
            <person name="Buczek O."/>
            <person name="Yoshikami D."/>
            <person name="Watkins M."/>
            <person name="Bulaj G."/>
            <person name="Jimenez E.C."/>
            <person name="Olivera B.M."/>
        </authorList>
    </citation>
    <scope>ERRATUM OF PUBMED:16098199</scope>
</reference>
<evidence type="ECO:0000250" key="1"/>
<evidence type="ECO:0000250" key="2">
    <source>
        <dbReference type="UniProtKB" id="Q7Z094"/>
    </source>
</evidence>
<evidence type="ECO:0000305" key="3"/>
<feature type="chain" id="PRO_0000262689" description="Iota-conotoxin-like S11.2">
    <location>
        <begin position="1" status="less than"/>
        <end position="42"/>
    </location>
</feature>
<feature type="propeptide" id="PRO_0000262690" description="Removed by a carboxypeptidase" evidence="1">
    <location>
        <position position="43"/>
    </location>
</feature>
<feature type="modified residue" description="D-methionine" evidence="1">
    <location>
        <position position="41"/>
    </location>
</feature>
<feature type="disulfide bond" evidence="2">
    <location>
        <begin position="2"/>
        <end position="16"/>
    </location>
</feature>
<feature type="disulfide bond" evidence="2">
    <location>
        <begin position="9"/>
        <end position="19"/>
    </location>
</feature>
<feature type="disulfide bond" evidence="2">
    <location>
        <begin position="15"/>
        <end position="24"/>
    </location>
</feature>
<feature type="disulfide bond" evidence="2">
    <location>
        <begin position="18"/>
        <end position="35"/>
    </location>
</feature>
<feature type="non-terminal residue">
    <location>
        <position position="1"/>
    </location>
</feature>
<sequence>GCKKDRKPCSYQADCCNCCPIGTCAPSTNWILPGCSTGPFMAR</sequence>
<accession>P0C259</accession>
<dbReference type="ConoServer" id="1419">
    <property type="toxin name" value="S11.2a"/>
</dbReference>
<dbReference type="GO" id="GO:0005576">
    <property type="term" value="C:extracellular region"/>
    <property type="evidence" value="ECO:0007669"/>
    <property type="project" value="UniProtKB-SubCell"/>
</dbReference>
<dbReference type="GO" id="GO:0017080">
    <property type="term" value="F:sodium channel regulator activity"/>
    <property type="evidence" value="ECO:0007669"/>
    <property type="project" value="UniProtKB-KW"/>
</dbReference>
<dbReference type="GO" id="GO:0090729">
    <property type="term" value="F:toxin activity"/>
    <property type="evidence" value="ECO:0007669"/>
    <property type="project" value="UniProtKB-KW"/>
</dbReference>
<dbReference type="Gene3D" id="4.10.40.80">
    <property type="match status" value="1"/>
</dbReference>
<dbReference type="InterPro" id="IPR013141">
    <property type="entry name" value="Conotoxin-I_CS"/>
</dbReference>
<dbReference type="InterPro" id="IPR012624">
    <property type="entry name" value="Toxin_19"/>
</dbReference>
<dbReference type="Pfam" id="PF08088">
    <property type="entry name" value="Toxin_19"/>
    <property type="match status" value="1"/>
</dbReference>
<dbReference type="PROSITE" id="PS60019">
    <property type="entry name" value="I_CONOTOXIN"/>
    <property type="match status" value="1"/>
</dbReference>
<protein>
    <recommendedName>
        <fullName>Iota-conotoxin-like S11.2</fullName>
    </recommendedName>
</protein>